<evidence type="ECO:0000255" key="1"/>
<evidence type="ECO:0000269" key="2">
    <source>
    </source>
</evidence>
<evidence type="ECO:0000269" key="3">
    <source>
    </source>
</evidence>
<evidence type="ECO:0000269" key="4">
    <source>
    </source>
</evidence>
<evidence type="ECO:0000305" key="5"/>
<evidence type="ECO:0000312" key="6">
    <source>
        <dbReference type="HGNC" id="HGNC:23517"/>
    </source>
</evidence>
<reference key="1">
    <citation type="journal article" date="2004" name="Nat. Genet.">
        <title>Complete sequencing and characterization of 21,243 full-length human cDNAs.</title>
        <authorList>
            <person name="Ota T."/>
            <person name="Suzuki Y."/>
            <person name="Nishikawa T."/>
            <person name="Otsuki T."/>
            <person name="Sugiyama T."/>
            <person name="Irie R."/>
            <person name="Wakamatsu A."/>
            <person name="Hayashi K."/>
            <person name="Sato H."/>
            <person name="Nagai K."/>
            <person name="Kimura K."/>
            <person name="Makita H."/>
            <person name="Sekine M."/>
            <person name="Obayashi M."/>
            <person name="Nishi T."/>
            <person name="Shibahara T."/>
            <person name="Tanaka T."/>
            <person name="Ishii S."/>
            <person name="Yamamoto J."/>
            <person name="Saito K."/>
            <person name="Kawai Y."/>
            <person name="Isono Y."/>
            <person name="Nakamura Y."/>
            <person name="Nagahari K."/>
            <person name="Murakami K."/>
            <person name="Yasuda T."/>
            <person name="Iwayanagi T."/>
            <person name="Wagatsuma M."/>
            <person name="Shiratori A."/>
            <person name="Sudo H."/>
            <person name="Hosoiri T."/>
            <person name="Kaku Y."/>
            <person name="Kodaira H."/>
            <person name="Kondo H."/>
            <person name="Sugawara M."/>
            <person name="Takahashi M."/>
            <person name="Kanda K."/>
            <person name="Yokoi T."/>
            <person name="Furuya T."/>
            <person name="Kikkawa E."/>
            <person name="Omura Y."/>
            <person name="Abe K."/>
            <person name="Kamihara K."/>
            <person name="Katsuta N."/>
            <person name="Sato K."/>
            <person name="Tanikawa M."/>
            <person name="Yamazaki M."/>
            <person name="Ninomiya K."/>
            <person name="Ishibashi T."/>
            <person name="Yamashita H."/>
            <person name="Murakawa K."/>
            <person name="Fujimori K."/>
            <person name="Tanai H."/>
            <person name="Kimata M."/>
            <person name="Watanabe M."/>
            <person name="Hiraoka S."/>
            <person name="Chiba Y."/>
            <person name="Ishida S."/>
            <person name="Ono Y."/>
            <person name="Takiguchi S."/>
            <person name="Watanabe S."/>
            <person name="Yosida M."/>
            <person name="Hotuta T."/>
            <person name="Kusano J."/>
            <person name="Kanehori K."/>
            <person name="Takahashi-Fujii A."/>
            <person name="Hara H."/>
            <person name="Tanase T.-O."/>
            <person name="Nomura Y."/>
            <person name="Togiya S."/>
            <person name="Komai F."/>
            <person name="Hara R."/>
            <person name="Takeuchi K."/>
            <person name="Arita M."/>
            <person name="Imose N."/>
            <person name="Musashino K."/>
            <person name="Yuuki H."/>
            <person name="Oshima A."/>
            <person name="Sasaki N."/>
            <person name="Aotsuka S."/>
            <person name="Yoshikawa Y."/>
            <person name="Matsunawa H."/>
            <person name="Ichihara T."/>
            <person name="Shiohata N."/>
            <person name="Sano S."/>
            <person name="Moriya S."/>
            <person name="Momiyama H."/>
            <person name="Satoh N."/>
            <person name="Takami S."/>
            <person name="Terashima Y."/>
            <person name="Suzuki O."/>
            <person name="Nakagawa S."/>
            <person name="Senoh A."/>
            <person name="Mizoguchi H."/>
            <person name="Goto Y."/>
            <person name="Shimizu F."/>
            <person name="Wakebe H."/>
            <person name="Hishigaki H."/>
            <person name="Watanabe T."/>
            <person name="Sugiyama A."/>
            <person name="Takemoto M."/>
            <person name="Kawakami B."/>
            <person name="Yamazaki M."/>
            <person name="Watanabe K."/>
            <person name="Kumagai A."/>
            <person name="Itakura S."/>
            <person name="Fukuzumi Y."/>
            <person name="Fujimori Y."/>
            <person name="Komiyama M."/>
            <person name="Tashiro H."/>
            <person name="Tanigami A."/>
            <person name="Fujiwara T."/>
            <person name="Ono T."/>
            <person name="Yamada K."/>
            <person name="Fujii Y."/>
            <person name="Ozaki K."/>
            <person name="Hirao M."/>
            <person name="Ohmori Y."/>
            <person name="Kawabata A."/>
            <person name="Hikiji T."/>
            <person name="Kobatake N."/>
            <person name="Inagaki H."/>
            <person name="Ikema Y."/>
            <person name="Okamoto S."/>
            <person name="Okitani R."/>
            <person name="Kawakami T."/>
            <person name="Noguchi S."/>
            <person name="Itoh T."/>
            <person name="Shigeta K."/>
            <person name="Senba T."/>
            <person name="Matsumura K."/>
            <person name="Nakajima Y."/>
            <person name="Mizuno T."/>
            <person name="Morinaga M."/>
            <person name="Sasaki M."/>
            <person name="Togashi T."/>
            <person name="Oyama M."/>
            <person name="Hata H."/>
            <person name="Watanabe M."/>
            <person name="Komatsu T."/>
            <person name="Mizushima-Sugano J."/>
            <person name="Satoh T."/>
            <person name="Shirai Y."/>
            <person name="Takahashi Y."/>
            <person name="Nakagawa K."/>
            <person name="Okumura K."/>
            <person name="Nagase T."/>
            <person name="Nomura N."/>
            <person name="Kikuchi H."/>
            <person name="Masuho Y."/>
            <person name="Yamashita R."/>
            <person name="Nakai K."/>
            <person name="Yada T."/>
            <person name="Nakamura Y."/>
            <person name="Ohara O."/>
            <person name="Isogai T."/>
            <person name="Sugano S."/>
        </authorList>
    </citation>
    <scope>NUCLEOTIDE SEQUENCE [LARGE SCALE MRNA]</scope>
    <scope>VARIANTS THR-461 AND THR-533</scope>
    <source>
        <tissue>Thyroid</tissue>
    </source>
</reference>
<reference key="2">
    <citation type="journal article" date="2004" name="Nature">
        <title>The DNA sequence and comparative analysis of human chromosome 10.</title>
        <authorList>
            <person name="Deloukas P."/>
            <person name="Earthrowl M.E."/>
            <person name="Grafham D.V."/>
            <person name="Rubenfield M."/>
            <person name="French L."/>
            <person name="Steward C.A."/>
            <person name="Sims S.K."/>
            <person name="Jones M.C."/>
            <person name="Searle S."/>
            <person name="Scott C."/>
            <person name="Howe K."/>
            <person name="Hunt S.E."/>
            <person name="Andrews T.D."/>
            <person name="Gilbert J.G.R."/>
            <person name="Swarbreck D."/>
            <person name="Ashurst J.L."/>
            <person name="Taylor A."/>
            <person name="Battles J."/>
            <person name="Bird C.P."/>
            <person name="Ainscough R."/>
            <person name="Almeida J.P."/>
            <person name="Ashwell R.I.S."/>
            <person name="Ambrose K.D."/>
            <person name="Babbage A.K."/>
            <person name="Bagguley C.L."/>
            <person name="Bailey J."/>
            <person name="Banerjee R."/>
            <person name="Bates K."/>
            <person name="Beasley H."/>
            <person name="Bray-Allen S."/>
            <person name="Brown A.J."/>
            <person name="Brown J.Y."/>
            <person name="Burford D.C."/>
            <person name="Burrill W."/>
            <person name="Burton J."/>
            <person name="Cahill P."/>
            <person name="Camire D."/>
            <person name="Carter N.P."/>
            <person name="Chapman J.C."/>
            <person name="Clark S.Y."/>
            <person name="Clarke G."/>
            <person name="Clee C.M."/>
            <person name="Clegg S."/>
            <person name="Corby N."/>
            <person name="Coulson A."/>
            <person name="Dhami P."/>
            <person name="Dutta I."/>
            <person name="Dunn M."/>
            <person name="Faulkner L."/>
            <person name="Frankish A."/>
            <person name="Frankland J.A."/>
            <person name="Garner P."/>
            <person name="Garnett J."/>
            <person name="Gribble S."/>
            <person name="Griffiths C."/>
            <person name="Grocock R."/>
            <person name="Gustafson E."/>
            <person name="Hammond S."/>
            <person name="Harley J.L."/>
            <person name="Hart E."/>
            <person name="Heath P.D."/>
            <person name="Ho T.P."/>
            <person name="Hopkins B."/>
            <person name="Horne J."/>
            <person name="Howden P.J."/>
            <person name="Huckle E."/>
            <person name="Hynds C."/>
            <person name="Johnson C."/>
            <person name="Johnson D."/>
            <person name="Kana A."/>
            <person name="Kay M."/>
            <person name="Kimberley A.M."/>
            <person name="Kershaw J.K."/>
            <person name="Kokkinaki M."/>
            <person name="Laird G.K."/>
            <person name="Lawlor S."/>
            <person name="Lee H.M."/>
            <person name="Leongamornlert D.A."/>
            <person name="Laird G."/>
            <person name="Lloyd C."/>
            <person name="Lloyd D.M."/>
            <person name="Loveland J."/>
            <person name="Lovell J."/>
            <person name="McLaren S."/>
            <person name="McLay K.E."/>
            <person name="McMurray A."/>
            <person name="Mashreghi-Mohammadi M."/>
            <person name="Matthews L."/>
            <person name="Milne S."/>
            <person name="Nickerson T."/>
            <person name="Nguyen M."/>
            <person name="Overton-Larty E."/>
            <person name="Palmer S.A."/>
            <person name="Pearce A.V."/>
            <person name="Peck A.I."/>
            <person name="Pelan S."/>
            <person name="Phillimore B."/>
            <person name="Porter K."/>
            <person name="Rice C.M."/>
            <person name="Rogosin A."/>
            <person name="Ross M.T."/>
            <person name="Sarafidou T."/>
            <person name="Sehra H.K."/>
            <person name="Shownkeen R."/>
            <person name="Skuce C.D."/>
            <person name="Smith M."/>
            <person name="Standring L."/>
            <person name="Sycamore N."/>
            <person name="Tester J."/>
            <person name="Thorpe A."/>
            <person name="Torcasso W."/>
            <person name="Tracey A."/>
            <person name="Tromans A."/>
            <person name="Tsolas J."/>
            <person name="Wall M."/>
            <person name="Walsh J."/>
            <person name="Wang H."/>
            <person name="Weinstock K."/>
            <person name="West A.P."/>
            <person name="Willey D.L."/>
            <person name="Whitehead S.L."/>
            <person name="Wilming L."/>
            <person name="Wray P.W."/>
            <person name="Young L."/>
            <person name="Chen Y."/>
            <person name="Lovering R.C."/>
            <person name="Moschonas N.K."/>
            <person name="Siebert R."/>
            <person name="Fechtel K."/>
            <person name="Bentley D."/>
            <person name="Durbin R.M."/>
            <person name="Hubbard T."/>
            <person name="Doucette-Stamm L."/>
            <person name="Beck S."/>
            <person name="Smith D.R."/>
            <person name="Rogers J."/>
        </authorList>
    </citation>
    <scope>NUCLEOTIDE SEQUENCE [LARGE SCALE GENOMIC DNA]</scope>
</reference>
<reference key="3">
    <citation type="submission" date="2005-09" db="EMBL/GenBank/DDBJ databases">
        <authorList>
            <person name="Mural R.J."/>
            <person name="Istrail S."/>
            <person name="Sutton G.G."/>
            <person name="Florea L."/>
            <person name="Halpern A.L."/>
            <person name="Mobarry C.M."/>
            <person name="Lippert R."/>
            <person name="Walenz B."/>
            <person name="Shatkay H."/>
            <person name="Dew I."/>
            <person name="Miller J.R."/>
            <person name="Flanigan M.J."/>
            <person name="Edwards N.J."/>
            <person name="Bolanos R."/>
            <person name="Fasulo D."/>
            <person name="Halldorsson B.V."/>
            <person name="Hannenhalli S."/>
            <person name="Turner R."/>
            <person name="Yooseph S."/>
            <person name="Lu F."/>
            <person name="Nusskern D.R."/>
            <person name="Shue B.C."/>
            <person name="Zheng X.H."/>
            <person name="Zhong F."/>
            <person name="Delcher A.L."/>
            <person name="Huson D.H."/>
            <person name="Kravitz S.A."/>
            <person name="Mouchard L."/>
            <person name="Reinert K."/>
            <person name="Remington K.A."/>
            <person name="Clark A.G."/>
            <person name="Waterman M.S."/>
            <person name="Eichler E.E."/>
            <person name="Adams M.D."/>
            <person name="Hunkapiller M.W."/>
            <person name="Myers E.W."/>
            <person name="Venter J.C."/>
        </authorList>
    </citation>
    <scope>NUCLEOTIDE SEQUENCE [LARGE SCALE GENOMIC DNA]</scope>
</reference>
<reference key="4">
    <citation type="journal article" date="2004" name="Genome Res.">
        <title>The status, quality, and expansion of the NIH full-length cDNA project: the Mammalian Gene Collection (MGC).</title>
        <authorList>
            <consortium name="The MGC Project Team"/>
        </authorList>
    </citation>
    <scope>NUCLEOTIDE SEQUENCE [LARGE SCALE MRNA]</scope>
    <scope>VARIANTS SER-428 AND THR-461</scope>
    <source>
        <tissue>Uterus</tissue>
    </source>
</reference>
<reference key="5">
    <citation type="journal article" date="2019" name="Mitochondrion">
        <title>Pyridine nucleotide-disulphide oxidoreductase domain 2 (PYROXD2): Role in mitochondrial function.</title>
        <authorList>
            <person name="Wang T."/>
            <person name="Xie X."/>
            <person name="Liu H."/>
            <person name="Chen F."/>
            <person name="Du J."/>
            <person name="Wang X."/>
            <person name="Jiang X."/>
            <person name="Yu F."/>
            <person name="Fan H."/>
        </authorList>
    </citation>
    <scope>SUBCELLULAR LOCATION</scope>
    <scope>INTERACTION WITH COX5B</scope>
    <scope>FUNCTION</scope>
</reference>
<protein>
    <recommendedName>
        <fullName evidence="5">Pyridine nucleotide-disulfide oxidoreductase domain-containing protein 2</fullName>
        <ecNumber>1.-.-.-</ecNumber>
    </recommendedName>
</protein>
<sequence length="581" mass="63068">MAASGRGLCKAVAASPFPAWRRDNTEARGGLKPEYDAVVIGAGHNGLVAAAYLQRLGVNTAVFERRHVIGGAAVTEEIIPGFKFSRASYLLSLLRPQIYTDLELKKHGLRLHLRNPYSFTPMLEEGAGSKVPRCLLLGTDMAENQKQIAQFSQKDAQVFPKYEEFMHRLALAIDPLLDAAPVDMAAFQHGSLLQRMRSLSTLKPLLKAGRILGAQLPRYYEVLTAPITKVLDQWFESEPLKATLATDAVIGAMTSPHTPGSGYVLLHHVMGGLEGMQGAWGYVQGGMGALSDAIASSATTHGASIFTEKTVAKVQVNSEGCVQGVVLEDGTEVRSKMVLSNTSPQITFLKLTPQEWLPEEFLERISQLDTRSPVTKINVAVDRLPSFLAAPNAPRGQPLPHHQCSIHLNCEDTLLLHQAFEDAMDGLPSHRPVIELCIPSSLDPTLAPPGCHVVSLFTQYMPYTLAGGKAWDEQERDAYADRVFDCIEVYAPGFKDSVVGRDILTPPDLERIFGLPGGNIFHCAMSLDQLYFARPVPLHSGYRCPLQGLYLCGSGAHPGGGVMGAAGRNAAHVAFRDLKSM</sequence>
<comment type="function">
    <text evidence="4">Probable oxidoreductase that may play a role as regulator of mitochondrial function.</text>
</comment>
<comment type="subunit">
    <text evidence="4">Interacts with COX5B; this interaction may contribute to localize PYROXD2 to the inner face of the inner mitochondrial membrane.</text>
</comment>
<comment type="interaction">
    <interactant intactId="EBI-3919450">
        <id>Q8N2H3</id>
    </interactant>
    <interactant intactId="EBI-743771">
        <id>Q92624</id>
        <label>APPBP2</label>
    </interactant>
    <organismsDiffer>false</organismsDiffer>
    <experiments>3</experiments>
</comment>
<comment type="subcellular location">
    <subcellularLocation>
        <location evidence="4">Mitochondrion matrix</location>
    </subcellularLocation>
    <text evidence="4">The import into mitochondria is dependent on TOMM40 and TIMM23.</text>
</comment>
<comment type="similarity">
    <text evidence="5">Belongs to the carotenoid/retinoid oxidoreductase family.</text>
</comment>
<gene>
    <name evidence="6" type="primary">PYROXD2</name>
    <name type="synonym">C10orf33</name>
</gene>
<name>PYRD2_HUMAN</name>
<dbReference type="EC" id="1.-.-.-"/>
<dbReference type="EMBL" id="AK075265">
    <property type="protein sequence ID" value="BAC11507.1"/>
    <property type="molecule type" value="mRNA"/>
</dbReference>
<dbReference type="EMBL" id="AL139243">
    <property type="status" value="NOT_ANNOTATED_CDS"/>
    <property type="molecule type" value="Genomic_DNA"/>
</dbReference>
<dbReference type="EMBL" id="CH471066">
    <property type="protein sequence ID" value="EAW49884.1"/>
    <property type="molecule type" value="Genomic_DNA"/>
</dbReference>
<dbReference type="EMBL" id="CH471066">
    <property type="protein sequence ID" value="EAW49885.1"/>
    <property type="molecule type" value="Genomic_DNA"/>
</dbReference>
<dbReference type="EMBL" id="BC006131">
    <property type="protein sequence ID" value="AAH06131.1"/>
    <property type="molecule type" value="mRNA"/>
</dbReference>
<dbReference type="CCDS" id="CCDS7474.1"/>
<dbReference type="RefSeq" id="NP_116098.2">
    <property type="nucleotide sequence ID" value="NM_032709.3"/>
</dbReference>
<dbReference type="SMR" id="Q8N2H3"/>
<dbReference type="BioGRID" id="124263">
    <property type="interactions" value="24"/>
</dbReference>
<dbReference type="FunCoup" id="Q8N2H3">
    <property type="interactions" value="285"/>
</dbReference>
<dbReference type="IntAct" id="Q8N2H3">
    <property type="interactions" value="6"/>
</dbReference>
<dbReference type="MINT" id="Q8N2H3"/>
<dbReference type="STRING" id="9606.ENSP00000359607"/>
<dbReference type="GlyGen" id="Q8N2H3">
    <property type="glycosylation" value="1 site, 1 O-linked glycan (1 site)"/>
</dbReference>
<dbReference type="iPTMnet" id="Q8N2H3"/>
<dbReference type="PhosphoSitePlus" id="Q8N2H3"/>
<dbReference type="BioMuta" id="PYROXD2"/>
<dbReference type="DMDM" id="109820933"/>
<dbReference type="jPOST" id="Q8N2H3"/>
<dbReference type="MassIVE" id="Q8N2H3"/>
<dbReference type="PaxDb" id="9606-ENSP00000359607"/>
<dbReference type="PeptideAtlas" id="Q8N2H3"/>
<dbReference type="ProteomicsDB" id="71699"/>
<dbReference type="Pumba" id="Q8N2H3"/>
<dbReference type="Antibodypedia" id="31034">
    <property type="antibodies" value="91 antibodies from 18 providers"/>
</dbReference>
<dbReference type="DNASU" id="84795"/>
<dbReference type="Ensembl" id="ENST00000370575.5">
    <property type="protein sequence ID" value="ENSP00000359607.4"/>
    <property type="gene ID" value="ENSG00000119943.13"/>
</dbReference>
<dbReference type="GeneID" id="84795"/>
<dbReference type="KEGG" id="hsa:84795"/>
<dbReference type="MANE-Select" id="ENST00000370575.5">
    <property type="protein sequence ID" value="ENSP00000359607.4"/>
    <property type="RefSeq nucleotide sequence ID" value="NM_032709.3"/>
    <property type="RefSeq protein sequence ID" value="NP_116098.2"/>
</dbReference>
<dbReference type="UCSC" id="uc001kpc.4">
    <property type="organism name" value="human"/>
</dbReference>
<dbReference type="AGR" id="HGNC:23517"/>
<dbReference type="CTD" id="84795"/>
<dbReference type="DisGeNET" id="84795"/>
<dbReference type="GeneCards" id="PYROXD2"/>
<dbReference type="HGNC" id="HGNC:23517">
    <property type="gene designation" value="PYROXD2"/>
</dbReference>
<dbReference type="HPA" id="ENSG00000119943">
    <property type="expression patterns" value="Low tissue specificity"/>
</dbReference>
<dbReference type="MIM" id="617889">
    <property type="type" value="gene"/>
</dbReference>
<dbReference type="neXtProt" id="NX_Q8N2H3"/>
<dbReference type="OpenTargets" id="ENSG00000119943"/>
<dbReference type="PharmGKB" id="PA165549043"/>
<dbReference type="VEuPathDB" id="HostDB:ENSG00000119943"/>
<dbReference type="eggNOG" id="KOG4254">
    <property type="taxonomic scope" value="Eukaryota"/>
</dbReference>
<dbReference type="GeneTree" id="ENSGT00390000011684"/>
<dbReference type="HOGENOM" id="CLU_019327_0_0_1"/>
<dbReference type="InParanoid" id="Q8N2H3"/>
<dbReference type="OMA" id="GLYHCGS"/>
<dbReference type="OrthoDB" id="7777654at2759"/>
<dbReference type="PAN-GO" id="Q8N2H3">
    <property type="GO annotations" value="0 GO annotations based on evolutionary models"/>
</dbReference>
<dbReference type="PhylomeDB" id="Q8N2H3"/>
<dbReference type="TreeFam" id="TF315188"/>
<dbReference type="PathwayCommons" id="Q8N2H3"/>
<dbReference type="SignaLink" id="Q8N2H3"/>
<dbReference type="BioGRID-ORCS" id="84795">
    <property type="hits" value="12 hits in 1152 CRISPR screens"/>
</dbReference>
<dbReference type="ChiTaRS" id="PYROXD2">
    <property type="organism name" value="human"/>
</dbReference>
<dbReference type="GenomeRNAi" id="84795"/>
<dbReference type="Pharos" id="Q8N2H3">
    <property type="development level" value="Tbio"/>
</dbReference>
<dbReference type="PRO" id="PR:Q8N2H3"/>
<dbReference type="Proteomes" id="UP000005640">
    <property type="component" value="Chromosome 10"/>
</dbReference>
<dbReference type="RNAct" id="Q8N2H3">
    <property type="molecule type" value="protein"/>
</dbReference>
<dbReference type="Bgee" id="ENSG00000119943">
    <property type="expression patterns" value="Expressed in right uterine tube and 171 other cell types or tissues"/>
</dbReference>
<dbReference type="GO" id="GO:0005759">
    <property type="term" value="C:mitochondrial matrix"/>
    <property type="evidence" value="ECO:0000315"/>
    <property type="project" value="UniProtKB"/>
</dbReference>
<dbReference type="GO" id="GO:0005739">
    <property type="term" value="C:mitochondrion"/>
    <property type="evidence" value="ECO:0006056"/>
    <property type="project" value="FlyBase"/>
</dbReference>
<dbReference type="GO" id="GO:0016491">
    <property type="term" value="F:oxidoreductase activity"/>
    <property type="evidence" value="ECO:0007669"/>
    <property type="project" value="UniProtKB-KW"/>
</dbReference>
<dbReference type="GO" id="GO:0007005">
    <property type="term" value="P:mitochondrion organization"/>
    <property type="evidence" value="ECO:0000315"/>
    <property type="project" value="UniProtKB"/>
</dbReference>
<dbReference type="Gene3D" id="3.50.50.60">
    <property type="entry name" value="FAD/NAD(P)-binding domain"/>
    <property type="match status" value="2"/>
</dbReference>
<dbReference type="InterPro" id="IPR002937">
    <property type="entry name" value="Amino_oxidase"/>
</dbReference>
<dbReference type="InterPro" id="IPR036188">
    <property type="entry name" value="FAD/NAD-bd_sf"/>
</dbReference>
<dbReference type="PANTHER" id="PTHR10668">
    <property type="entry name" value="PHYTOENE DEHYDROGENASE"/>
    <property type="match status" value="1"/>
</dbReference>
<dbReference type="PANTHER" id="PTHR10668:SF103">
    <property type="entry name" value="PYRIDINE NUCLEOTIDE-DISULFIDE OXIDOREDUCTASE DOMAIN-CONTAINING PROTEIN 2"/>
    <property type="match status" value="1"/>
</dbReference>
<dbReference type="Pfam" id="PF01593">
    <property type="entry name" value="Amino_oxidase"/>
    <property type="match status" value="1"/>
</dbReference>
<dbReference type="Pfam" id="PF13450">
    <property type="entry name" value="NAD_binding_8"/>
    <property type="match status" value="1"/>
</dbReference>
<dbReference type="SUPFAM" id="SSF51905">
    <property type="entry name" value="FAD/NAD(P)-binding domain"/>
    <property type="match status" value="1"/>
</dbReference>
<feature type="chain" id="PRO_0000244071" description="Pyridine nucleotide-disulfide oxidoreductase domain-containing protein 2">
    <location>
        <begin position="1"/>
        <end position="581"/>
    </location>
</feature>
<feature type="binding site" evidence="1">
    <location>
        <begin position="38"/>
        <end position="71"/>
    </location>
    <ligand>
        <name>FAD</name>
        <dbReference type="ChEBI" id="CHEBI:57692"/>
    </ligand>
</feature>
<feature type="sequence variant" id="VAR_026877" description="In dbSNP:rs17856170." evidence="3">
    <original>P</original>
    <variation>S</variation>
    <location>
        <position position="428"/>
    </location>
</feature>
<feature type="sequence variant" id="VAR_026878" description="In dbSNP:rs2147896." evidence="2 3">
    <original>M</original>
    <variation>T</variation>
    <location>
        <position position="461"/>
    </location>
</feature>
<feature type="sequence variant" id="VAR_026879" description="In dbSNP:rs2296441." evidence="2">
    <original>A</original>
    <variation>T</variation>
    <location>
        <position position="533"/>
    </location>
</feature>
<keyword id="KW-0274">FAD</keyword>
<keyword id="KW-0285">Flavoprotein</keyword>
<keyword id="KW-0496">Mitochondrion</keyword>
<keyword id="KW-0560">Oxidoreductase</keyword>
<keyword id="KW-1267">Proteomics identification</keyword>
<keyword id="KW-1185">Reference proteome</keyword>
<accession>Q8N2H3</accession>
<accession>D3DR61</accession>
<accession>Q5TAA9</accession>
<accession>Q9BRQ1</accession>
<organism>
    <name type="scientific">Homo sapiens</name>
    <name type="common">Human</name>
    <dbReference type="NCBI Taxonomy" id="9606"/>
    <lineage>
        <taxon>Eukaryota</taxon>
        <taxon>Metazoa</taxon>
        <taxon>Chordata</taxon>
        <taxon>Craniata</taxon>
        <taxon>Vertebrata</taxon>
        <taxon>Euteleostomi</taxon>
        <taxon>Mammalia</taxon>
        <taxon>Eutheria</taxon>
        <taxon>Euarchontoglires</taxon>
        <taxon>Primates</taxon>
        <taxon>Haplorrhini</taxon>
        <taxon>Catarrhini</taxon>
        <taxon>Hominidae</taxon>
        <taxon>Homo</taxon>
    </lineage>
</organism>
<proteinExistence type="evidence at protein level"/>